<feature type="chain" id="PRO_1000076163" description="Aspartyl/glutamyl-tRNA(Asn/Gln) amidotransferase subunit B">
    <location>
        <begin position="1"/>
        <end position="481"/>
    </location>
</feature>
<keyword id="KW-0067">ATP-binding</keyword>
<keyword id="KW-0436">Ligase</keyword>
<keyword id="KW-0547">Nucleotide-binding</keyword>
<keyword id="KW-0648">Protein biosynthesis</keyword>
<dbReference type="EC" id="6.3.5.-" evidence="1"/>
<dbReference type="EMBL" id="CP000749">
    <property type="protein sequence ID" value="ABR70858.1"/>
    <property type="molecule type" value="Genomic_DNA"/>
</dbReference>
<dbReference type="SMR" id="A6VWM9"/>
<dbReference type="STRING" id="400668.Mmwyl1_1934"/>
<dbReference type="KEGG" id="mmw:Mmwyl1_1934"/>
<dbReference type="eggNOG" id="COG0064">
    <property type="taxonomic scope" value="Bacteria"/>
</dbReference>
<dbReference type="HOGENOM" id="CLU_019240_0_0_6"/>
<dbReference type="OrthoDB" id="9804078at2"/>
<dbReference type="GO" id="GO:0050566">
    <property type="term" value="F:asparaginyl-tRNA synthase (glutamine-hydrolyzing) activity"/>
    <property type="evidence" value="ECO:0007669"/>
    <property type="project" value="RHEA"/>
</dbReference>
<dbReference type="GO" id="GO:0005524">
    <property type="term" value="F:ATP binding"/>
    <property type="evidence" value="ECO:0007669"/>
    <property type="project" value="UniProtKB-KW"/>
</dbReference>
<dbReference type="GO" id="GO:0050567">
    <property type="term" value="F:glutaminyl-tRNA synthase (glutamine-hydrolyzing) activity"/>
    <property type="evidence" value="ECO:0007669"/>
    <property type="project" value="UniProtKB-UniRule"/>
</dbReference>
<dbReference type="GO" id="GO:0070681">
    <property type="term" value="P:glutaminyl-tRNAGln biosynthesis via transamidation"/>
    <property type="evidence" value="ECO:0007669"/>
    <property type="project" value="TreeGrafter"/>
</dbReference>
<dbReference type="GO" id="GO:0006412">
    <property type="term" value="P:translation"/>
    <property type="evidence" value="ECO:0007669"/>
    <property type="project" value="UniProtKB-UniRule"/>
</dbReference>
<dbReference type="FunFam" id="1.10.10.410:FF:000001">
    <property type="entry name" value="Aspartyl/glutamyl-tRNA(Asn/Gln) amidotransferase subunit B"/>
    <property type="match status" value="1"/>
</dbReference>
<dbReference type="FunFam" id="1.10.150.380:FF:000001">
    <property type="entry name" value="Aspartyl/glutamyl-tRNA(Asn/Gln) amidotransferase subunit B"/>
    <property type="match status" value="1"/>
</dbReference>
<dbReference type="Gene3D" id="1.10.10.410">
    <property type="match status" value="1"/>
</dbReference>
<dbReference type="Gene3D" id="1.10.150.380">
    <property type="entry name" value="GatB domain, N-terminal subdomain"/>
    <property type="match status" value="1"/>
</dbReference>
<dbReference type="HAMAP" id="MF_00121">
    <property type="entry name" value="GatB"/>
    <property type="match status" value="1"/>
</dbReference>
<dbReference type="InterPro" id="IPR017959">
    <property type="entry name" value="Asn/Gln-tRNA_amidoTrfase_suB/E"/>
</dbReference>
<dbReference type="InterPro" id="IPR006075">
    <property type="entry name" value="Asn/Gln-tRNA_Trfase_suB/E_cat"/>
</dbReference>
<dbReference type="InterPro" id="IPR018027">
    <property type="entry name" value="Asn/Gln_amidotransferase"/>
</dbReference>
<dbReference type="InterPro" id="IPR003789">
    <property type="entry name" value="Asn/Gln_tRNA_amidoTrase-B-like"/>
</dbReference>
<dbReference type="InterPro" id="IPR004413">
    <property type="entry name" value="GatB"/>
</dbReference>
<dbReference type="InterPro" id="IPR042114">
    <property type="entry name" value="GatB_C_1"/>
</dbReference>
<dbReference type="InterPro" id="IPR023168">
    <property type="entry name" value="GatB_Yqey_C_2"/>
</dbReference>
<dbReference type="InterPro" id="IPR017958">
    <property type="entry name" value="Gln-tRNA_amidoTrfase_suB_CS"/>
</dbReference>
<dbReference type="InterPro" id="IPR014746">
    <property type="entry name" value="Gln_synth/guanido_kin_cat_dom"/>
</dbReference>
<dbReference type="NCBIfam" id="TIGR00133">
    <property type="entry name" value="gatB"/>
    <property type="match status" value="1"/>
</dbReference>
<dbReference type="NCBIfam" id="NF004012">
    <property type="entry name" value="PRK05477.1-2"/>
    <property type="match status" value="1"/>
</dbReference>
<dbReference type="NCBIfam" id="NF004014">
    <property type="entry name" value="PRK05477.1-4"/>
    <property type="match status" value="1"/>
</dbReference>
<dbReference type="NCBIfam" id="NF004015">
    <property type="entry name" value="PRK05477.1-5"/>
    <property type="match status" value="1"/>
</dbReference>
<dbReference type="PANTHER" id="PTHR11659">
    <property type="entry name" value="GLUTAMYL-TRNA GLN AMIDOTRANSFERASE SUBUNIT B MITOCHONDRIAL AND PROKARYOTIC PET112-RELATED"/>
    <property type="match status" value="1"/>
</dbReference>
<dbReference type="PANTHER" id="PTHR11659:SF0">
    <property type="entry name" value="GLUTAMYL-TRNA(GLN) AMIDOTRANSFERASE SUBUNIT B, MITOCHONDRIAL"/>
    <property type="match status" value="1"/>
</dbReference>
<dbReference type="Pfam" id="PF02934">
    <property type="entry name" value="GatB_N"/>
    <property type="match status" value="1"/>
</dbReference>
<dbReference type="Pfam" id="PF02637">
    <property type="entry name" value="GatB_Yqey"/>
    <property type="match status" value="1"/>
</dbReference>
<dbReference type="SMART" id="SM00845">
    <property type="entry name" value="GatB_Yqey"/>
    <property type="match status" value="1"/>
</dbReference>
<dbReference type="SUPFAM" id="SSF89095">
    <property type="entry name" value="GatB/YqeY motif"/>
    <property type="match status" value="1"/>
</dbReference>
<dbReference type="SUPFAM" id="SSF55931">
    <property type="entry name" value="Glutamine synthetase/guanido kinase"/>
    <property type="match status" value="1"/>
</dbReference>
<dbReference type="PROSITE" id="PS01234">
    <property type="entry name" value="GATB"/>
    <property type="match status" value="1"/>
</dbReference>
<proteinExistence type="inferred from homology"/>
<accession>A6VWM9</accession>
<organism>
    <name type="scientific">Marinomonas sp. (strain MWYL1)</name>
    <dbReference type="NCBI Taxonomy" id="400668"/>
    <lineage>
        <taxon>Bacteria</taxon>
        <taxon>Pseudomonadati</taxon>
        <taxon>Pseudomonadota</taxon>
        <taxon>Gammaproteobacteria</taxon>
        <taxon>Oceanospirillales</taxon>
        <taxon>Oceanospirillaceae</taxon>
        <taxon>Marinomonas</taxon>
    </lineage>
</organism>
<reference key="1">
    <citation type="submission" date="2007-06" db="EMBL/GenBank/DDBJ databases">
        <title>Complete sequence of Marinomonas sp. MWYL1.</title>
        <authorList>
            <consortium name="US DOE Joint Genome Institute"/>
            <person name="Copeland A."/>
            <person name="Lucas S."/>
            <person name="Lapidus A."/>
            <person name="Barry K."/>
            <person name="Glavina del Rio T."/>
            <person name="Dalin E."/>
            <person name="Tice H."/>
            <person name="Pitluck S."/>
            <person name="Kiss H."/>
            <person name="Brettin T."/>
            <person name="Bruce D."/>
            <person name="Detter J.C."/>
            <person name="Han C."/>
            <person name="Schmutz J."/>
            <person name="Larimer F."/>
            <person name="Land M."/>
            <person name="Hauser L."/>
            <person name="Kyrpides N."/>
            <person name="Kim E."/>
            <person name="Johnston A.W.B."/>
            <person name="Todd J.D."/>
            <person name="Rogers R."/>
            <person name="Wexler M."/>
            <person name="Bond P.L."/>
            <person name="Li Y."/>
            <person name="Richardson P."/>
        </authorList>
    </citation>
    <scope>NUCLEOTIDE SEQUENCE [LARGE SCALE GENOMIC DNA]</scope>
    <source>
        <strain>MWYL1</strain>
    </source>
</reference>
<name>GATB_MARMS</name>
<gene>
    <name evidence="1" type="primary">gatB</name>
    <name type="ordered locus">Mmwyl1_1934</name>
</gene>
<protein>
    <recommendedName>
        <fullName evidence="1">Aspartyl/glutamyl-tRNA(Asn/Gln) amidotransferase subunit B</fullName>
        <shortName evidence="1">Asp/Glu-ADT subunit B</shortName>
        <ecNumber evidence="1">6.3.5.-</ecNumber>
    </recommendedName>
</protein>
<comment type="function">
    <text evidence="1">Allows the formation of correctly charged Asn-tRNA(Asn) or Gln-tRNA(Gln) through the transamidation of misacylated Asp-tRNA(Asn) or Glu-tRNA(Gln) in organisms which lack either or both of asparaginyl-tRNA or glutaminyl-tRNA synthetases. The reaction takes place in the presence of glutamine and ATP through an activated phospho-Asp-tRNA(Asn) or phospho-Glu-tRNA(Gln).</text>
</comment>
<comment type="catalytic activity">
    <reaction evidence="1">
        <text>L-glutamyl-tRNA(Gln) + L-glutamine + ATP + H2O = L-glutaminyl-tRNA(Gln) + L-glutamate + ADP + phosphate + H(+)</text>
        <dbReference type="Rhea" id="RHEA:17521"/>
        <dbReference type="Rhea" id="RHEA-COMP:9681"/>
        <dbReference type="Rhea" id="RHEA-COMP:9684"/>
        <dbReference type="ChEBI" id="CHEBI:15377"/>
        <dbReference type="ChEBI" id="CHEBI:15378"/>
        <dbReference type="ChEBI" id="CHEBI:29985"/>
        <dbReference type="ChEBI" id="CHEBI:30616"/>
        <dbReference type="ChEBI" id="CHEBI:43474"/>
        <dbReference type="ChEBI" id="CHEBI:58359"/>
        <dbReference type="ChEBI" id="CHEBI:78520"/>
        <dbReference type="ChEBI" id="CHEBI:78521"/>
        <dbReference type="ChEBI" id="CHEBI:456216"/>
    </reaction>
</comment>
<comment type="catalytic activity">
    <reaction evidence="1">
        <text>L-aspartyl-tRNA(Asn) + L-glutamine + ATP + H2O = L-asparaginyl-tRNA(Asn) + L-glutamate + ADP + phosphate + 2 H(+)</text>
        <dbReference type="Rhea" id="RHEA:14513"/>
        <dbReference type="Rhea" id="RHEA-COMP:9674"/>
        <dbReference type="Rhea" id="RHEA-COMP:9677"/>
        <dbReference type="ChEBI" id="CHEBI:15377"/>
        <dbReference type="ChEBI" id="CHEBI:15378"/>
        <dbReference type="ChEBI" id="CHEBI:29985"/>
        <dbReference type="ChEBI" id="CHEBI:30616"/>
        <dbReference type="ChEBI" id="CHEBI:43474"/>
        <dbReference type="ChEBI" id="CHEBI:58359"/>
        <dbReference type="ChEBI" id="CHEBI:78515"/>
        <dbReference type="ChEBI" id="CHEBI:78516"/>
        <dbReference type="ChEBI" id="CHEBI:456216"/>
    </reaction>
</comment>
<comment type="subunit">
    <text evidence="1">Heterotrimer of A, B and C subunits.</text>
</comment>
<comment type="similarity">
    <text evidence="1">Belongs to the GatB/GatE family. GatB subfamily.</text>
</comment>
<sequence>MNWEVVIGLEIHTQLSTKSKLFSGAAVGFGAEPNTQTTLVDLGMPGALPVFNKEALRMAVMFGHAINAEIGMTSVFARKNYFYPDLPKGYQTSQMDHPIVGKGYLDVMLDDGTTSRVGITRAHLEEDAGKSLHEDFQGMTGIDLNRSSTPLLEIVSEPDIRSAKEAVAYVKMIHSIVTYLGICDGNMAEGSMRCDINLSLRPKGQKEYGTRTEIKNVNSFRFIEKAIYTEIERQADILEDGGRIIQETRLYDPEKNETRSMRSKEDANDYRYFPCPDLLPVVLTQEYVDNIKATLPELPSQKAARFQSEHALSEYDANVLSSSRAMADFFEKANNVVKDPKLTANWVMGELSKLLNQEQLDIENSPVNAQAFGELLVRIKDNTINGKTAKDVFQAMWDGEGSADAIIEAKGLKQVTDTGAIEAMIQTILDANAAQVEQYRAADEDKQKKMIGFFVGQVMKASQGKANPGLVNPILAKMLKG</sequence>
<evidence type="ECO:0000255" key="1">
    <source>
        <dbReference type="HAMAP-Rule" id="MF_00121"/>
    </source>
</evidence>